<protein>
    <recommendedName>
        <fullName evidence="1">Small ribosomal subunit protein uS8</fullName>
    </recommendedName>
    <alternativeName>
        <fullName evidence="2">30S ribosomal protein S8</fullName>
    </alternativeName>
</protein>
<feature type="chain" id="PRO_0000126469" description="Small ribosomal subunit protein uS8">
    <location>
        <begin position="1"/>
        <end position="131"/>
    </location>
</feature>
<proteinExistence type="inferred from homology"/>
<reference key="1">
    <citation type="journal article" date="2002" name="Nature">
        <title>Genome sequence of the plant pathogen Ralstonia solanacearum.</title>
        <authorList>
            <person name="Salanoubat M."/>
            <person name="Genin S."/>
            <person name="Artiguenave F."/>
            <person name="Gouzy J."/>
            <person name="Mangenot S."/>
            <person name="Arlat M."/>
            <person name="Billault A."/>
            <person name="Brottier P."/>
            <person name="Camus J.-C."/>
            <person name="Cattolico L."/>
            <person name="Chandler M."/>
            <person name="Choisne N."/>
            <person name="Claudel-Renard C."/>
            <person name="Cunnac S."/>
            <person name="Demange N."/>
            <person name="Gaspin C."/>
            <person name="Lavie M."/>
            <person name="Moisan A."/>
            <person name="Robert C."/>
            <person name="Saurin W."/>
            <person name="Schiex T."/>
            <person name="Siguier P."/>
            <person name="Thebault P."/>
            <person name="Whalen M."/>
            <person name="Wincker P."/>
            <person name="Levy M."/>
            <person name="Weissenbach J."/>
            <person name="Boucher C.A."/>
        </authorList>
    </citation>
    <scope>NUCLEOTIDE SEQUENCE [LARGE SCALE GENOMIC DNA]</scope>
    <source>
        <strain>ATCC BAA-1114 / GMI1000</strain>
    </source>
</reference>
<dbReference type="EMBL" id="AL646052">
    <property type="protein sequence ID" value="CAD16714.1"/>
    <property type="molecule type" value="Genomic_DNA"/>
</dbReference>
<dbReference type="RefSeq" id="WP_011002908.1">
    <property type="nucleotide sequence ID" value="NC_003295.1"/>
</dbReference>
<dbReference type="SMR" id="Q8XV26"/>
<dbReference type="STRING" id="267608.RSc3005"/>
<dbReference type="EnsemblBacteria" id="CAD16714">
    <property type="protein sequence ID" value="CAD16714"/>
    <property type="gene ID" value="RSc3005"/>
</dbReference>
<dbReference type="KEGG" id="rso:RSc3005"/>
<dbReference type="eggNOG" id="COG0096">
    <property type="taxonomic scope" value="Bacteria"/>
</dbReference>
<dbReference type="HOGENOM" id="CLU_098428_0_0_4"/>
<dbReference type="Proteomes" id="UP000001436">
    <property type="component" value="Chromosome"/>
</dbReference>
<dbReference type="GO" id="GO:1990904">
    <property type="term" value="C:ribonucleoprotein complex"/>
    <property type="evidence" value="ECO:0007669"/>
    <property type="project" value="UniProtKB-KW"/>
</dbReference>
<dbReference type="GO" id="GO:0005840">
    <property type="term" value="C:ribosome"/>
    <property type="evidence" value="ECO:0007669"/>
    <property type="project" value="UniProtKB-KW"/>
</dbReference>
<dbReference type="GO" id="GO:0019843">
    <property type="term" value="F:rRNA binding"/>
    <property type="evidence" value="ECO:0007669"/>
    <property type="project" value="UniProtKB-UniRule"/>
</dbReference>
<dbReference type="GO" id="GO:0003735">
    <property type="term" value="F:structural constituent of ribosome"/>
    <property type="evidence" value="ECO:0007669"/>
    <property type="project" value="InterPro"/>
</dbReference>
<dbReference type="GO" id="GO:0006412">
    <property type="term" value="P:translation"/>
    <property type="evidence" value="ECO:0007669"/>
    <property type="project" value="UniProtKB-UniRule"/>
</dbReference>
<dbReference type="FunFam" id="3.30.1370.30:FF:000003">
    <property type="entry name" value="30S ribosomal protein S8"/>
    <property type="match status" value="1"/>
</dbReference>
<dbReference type="FunFam" id="3.30.1490.10:FF:000001">
    <property type="entry name" value="30S ribosomal protein S8"/>
    <property type="match status" value="1"/>
</dbReference>
<dbReference type="Gene3D" id="3.30.1370.30">
    <property type="match status" value="1"/>
</dbReference>
<dbReference type="Gene3D" id="3.30.1490.10">
    <property type="match status" value="1"/>
</dbReference>
<dbReference type="HAMAP" id="MF_01302_B">
    <property type="entry name" value="Ribosomal_uS8_B"/>
    <property type="match status" value="1"/>
</dbReference>
<dbReference type="InterPro" id="IPR000630">
    <property type="entry name" value="Ribosomal_uS8"/>
</dbReference>
<dbReference type="InterPro" id="IPR047863">
    <property type="entry name" value="Ribosomal_uS8_CS"/>
</dbReference>
<dbReference type="InterPro" id="IPR035987">
    <property type="entry name" value="Ribosomal_uS8_sf"/>
</dbReference>
<dbReference type="NCBIfam" id="NF001109">
    <property type="entry name" value="PRK00136.1"/>
    <property type="match status" value="1"/>
</dbReference>
<dbReference type="PANTHER" id="PTHR11758">
    <property type="entry name" value="40S RIBOSOMAL PROTEIN S15A"/>
    <property type="match status" value="1"/>
</dbReference>
<dbReference type="Pfam" id="PF00410">
    <property type="entry name" value="Ribosomal_S8"/>
    <property type="match status" value="1"/>
</dbReference>
<dbReference type="SUPFAM" id="SSF56047">
    <property type="entry name" value="Ribosomal protein S8"/>
    <property type="match status" value="1"/>
</dbReference>
<dbReference type="PROSITE" id="PS00053">
    <property type="entry name" value="RIBOSOMAL_S8"/>
    <property type="match status" value="1"/>
</dbReference>
<comment type="function">
    <text evidence="1">One of the primary rRNA binding proteins, it binds directly to 16S rRNA central domain where it helps coordinate assembly of the platform of the 30S subunit.</text>
</comment>
<comment type="subunit">
    <text evidence="1">Part of the 30S ribosomal subunit. Contacts proteins S5 and S12.</text>
</comment>
<comment type="similarity">
    <text evidence="1">Belongs to the universal ribosomal protein uS8 family.</text>
</comment>
<accession>Q8XV26</accession>
<gene>
    <name evidence="1" type="primary">rpsH</name>
    <name type="ordered locus">RSc3005</name>
    <name type="ORF">RS01085</name>
</gene>
<name>RS8_RALN1</name>
<keyword id="KW-1185">Reference proteome</keyword>
<keyword id="KW-0687">Ribonucleoprotein</keyword>
<keyword id="KW-0689">Ribosomal protein</keyword>
<keyword id="KW-0694">RNA-binding</keyword>
<keyword id="KW-0699">rRNA-binding</keyword>
<organism>
    <name type="scientific">Ralstonia nicotianae (strain ATCC BAA-1114 / GMI1000)</name>
    <name type="common">Ralstonia solanacearum</name>
    <dbReference type="NCBI Taxonomy" id="267608"/>
    <lineage>
        <taxon>Bacteria</taxon>
        <taxon>Pseudomonadati</taxon>
        <taxon>Pseudomonadota</taxon>
        <taxon>Betaproteobacteria</taxon>
        <taxon>Burkholderiales</taxon>
        <taxon>Burkholderiaceae</taxon>
        <taxon>Ralstonia</taxon>
        <taxon>Ralstonia solanacearum species complex</taxon>
    </lineage>
</organism>
<sequence length="131" mass="14126">MSMSDPIADMLTRIRNAQAVEKASVVMPSSKLKVAIAKVLKDEGYIDDFAVTEQGGKASLTIGLKYYAGRPVIERLERVSKPGLRVYKGRNEIPQVMNGLGVAIISTPQGLMTDRRARATGVGGEVICYVA</sequence>
<evidence type="ECO:0000255" key="1">
    <source>
        <dbReference type="HAMAP-Rule" id="MF_01302"/>
    </source>
</evidence>
<evidence type="ECO:0000305" key="2"/>